<protein>
    <recommendedName>
        <fullName evidence="1">Large ribosomal subunit protein bL17</fullName>
    </recommendedName>
    <alternativeName>
        <fullName evidence="2">50S ribosomal protein L17</fullName>
    </alternativeName>
</protein>
<comment type="subunit">
    <text evidence="1">Part of the 50S ribosomal subunit. Contacts protein L32.</text>
</comment>
<comment type="similarity">
    <text evidence="1">Belongs to the bacterial ribosomal protein bL17 family.</text>
</comment>
<feature type="chain" id="PRO_1000055790" description="Large ribosomal subunit protein bL17">
    <location>
        <begin position="1"/>
        <end position="118"/>
    </location>
</feature>
<dbReference type="EMBL" id="CP000776">
    <property type="protein sequence ID" value="ABS51370.1"/>
    <property type="molecule type" value="Genomic_DNA"/>
</dbReference>
<dbReference type="RefSeq" id="WP_012108092.1">
    <property type="nucleotide sequence ID" value="NC_009714.1"/>
</dbReference>
<dbReference type="SMR" id="A7HZX0"/>
<dbReference type="STRING" id="360107.CHAB381_0204"/>
<dbReference type="KEGG" id="cha:CHAB381_0204"/>
<dbReference type="eggNOG" id="COG0203">
    <property type="taxonomic scope" value="Bacteria"/>
</dbReference>
<dbReference type="HOGENOM" id="CLU_074407_2_0_7"/>
<dbReference type="OrthoDB" id="9809073at2"/>
<dbReference type="Proteomes" id="UP000002407">
    <property type="component" value="Chromosome"/>
</dbReference>
<dbReference type="GO" id="GO:0022625">
    <property type="term" value="C:cytosolic large ribosomal subunit"/>
    <property type="evidence" value="ECO:0007669"/>
    <property type="project" value="TreeGrafter"/>
</dbReference>
<dbReference type="GO" id="GO:0003735">
    <property type="term" value="F:structural constituent of ribosome"/>
    <property type="evidence" value="ECO:0007669"/>
    <property type="project" value="InterPro"/>
</dbReference>
<dbReference type="GO" id="GO:0006412">
    <property type="term" value="P:translation"/>
    <property type="evidence" value="ECO:0007669"/>
    <property type="project" value="UniProtKB-UniRule"/>
</dbReference>
<dbReference type="FunFam" id="3.90.1030.10:FF:000003">
    <property type="entry name" value="50S ribosomal protein L17"/>
    <property type="match status" value="1"/>
</dbReference>
<dbReference type="Gene3D" id="3.90.1030.10">
    <property type="entry name" value="Ribosomal protein L17"/>
    <property type="match status" value="1"/>
</dbReference>
<dbReference type="HAMAP" id="MF_01368">
    <property type="entry name" value="Ribosomal_bL17"/>
    <property type="match status" value="1"/>
</dbReference>
<dbReference type="InterPro" id="IPR000456">
    <property type="entry name" value="Ribosomal_bL17"/>
</dbReference>
<dbReference type="InterPro" id="IPR047859">
    <property type="entry name" value="Ribosomal_bL17_CS"/>
</dbReference>
<dbReference type="InterPro" id="IPR036373">
    <property type="entry name" value="Ribosomal_bL17_sf"/>
</dbReference>
<dbReference type="NCBIfam" id="TIGR00059">
    <property type="entry name" value="L17"/>
    <property type="match status" value="1"/>
</dbReference>
<dbReference type="PANTHER" id="PTHR14413:SF16">
    <property type="entry name" value="LARGE RIBOSOMAL SUBUNIT PROTEIN BL17M"/>
    <property type="match status" value="1"/>
</dbReference>
<dbReference type="PANTHER" id="PTHR14413">
    <property type="entry name" value="RIBOSOMAL PROTEIN L17"/>
    <property type="match status" value="1"/>
</dbReference>
<dbReference type="Pfam" id="PF01196">
    <property type="entry name" value="Ribosomal_L17"/>
    <property type="match status" value="1"/>
</dbReference>
<dbReference type="SUPFAM" id="SSF64263">
    <property type="entry name" value="Prokaryotic ribosomal protein L17"/>
    <property type="match status" value="1"/>
</dbReference>
<dbReference type="PROSITE" id="PS01167">
    <property type="entry name" value="RIBOSOMAL_L17"/>
    <property type="match status" value="1"/>
</dbReference>
<reference key="1">
    <citation type="submission" date="2007-07" db="EMBL/GenBank/DDBJ databases">
        <title>Complete genome sequence of Campylobacter hominis ATCC BAA-381, a commensal isolated from the human gastrointestinal tract.</title>
        <authorList>
            <person name="Fouts D.E."/>
            <person name="Mongodin E.F."/>
            <person name="Puiu D."/>
            <person name="Sebastian Y."/>
            <person name="Miller W.G."/>
            <person name="Mandrell R.E."/>
            <person name="Nelson K.E."/>
        </authorList>
    </citation>
    <scope>NUCLEOTIDE SEQUENCE [LARGE SCALE GENOMIC DNA]</scope>
    <source>
        <strain>ATCC BAA-381 / DSM 21671 / CCUG 45161 / LMG 19568 / NCTC 13146 / CH001A</strain>
    </source>
</reference>
<evidence type="ECO:0000255" key="1">
    <source>
        <dbReference type="HAMAP-Rule" id="MF_01368"/>
    </source>
</evidence>
<evidence type="ECO:0000305" key="2"/>
<keyword id="KW-1185">Reference proteome</keyword>
<keyword id="KW-0687">Ribonucleoprotein</keyword>
<keyword id="KW-0689">Ribosomal protein</keyword>
<name>RL17_CAMHC</name>
<sequence>MRHKNGYRKLGRTSSHRAALLKNLTIAIVKNGKIETTLEKAKELRSYVEKLITRARKGDFNAHKFVFAALQDKEATNMLVNEVAPKFATKNGGYTRIIKTRTRRGDAAEMAYIELINE</sequence>
<accession>A7HZX0</accession>
<organism>
    <name type="scientific">Campylobacter hominis (strain ATCC BAA-381 / DSM 21671 / CCUG 45161 / LMG 19568 / NCTC 13146 / CH001A)</name>
    <dbReference type="NCBI Taxonomy" id="360107"/>
    <lineage>
        <taxon>Bacteria</taxon>
        <taxon>Pseudomonadati</taxon>
        <taxon>Campylobacterota</taxon>
        <taxon>Epsilonproteobacteria</taxon>
        <taxon>Campylobacterales</taxon>
        <taxon>Campylobacteraceae</taxon>
        <taxon>Campylobacter</taxon>
    </lineage>
</organism>
<proteinExistence type="inferred from homology"/>
<gene>
    <name evidence="1" type="primary">rplQ</name>
    <name type="ordered locus">CHAB381_0204</name>
</gene>